<reference key="1">
    <citation type="journal article" date="2009" name="PLoS Pathog.">
        <title>Genomic evidence for the evolution of Streptococcus equi: host restriction, increased virulence, and genetic exchange with human pathogens.</title>
        <authorList>
            <person name="Holden M.T.G."/>
            <person name="Heather Z."/>
            <person name="Paillot R."/>
            <person name="Steward K.F."/>
            <person name="Webb K."/>
            <person name="Ainslie F."/>
            <person name="Jourdan T."/>
            <person name="Bason N.C."/>
            <person name="Holroyd N.E."/>
            <person name="Mungall K."/>
            <person name="Quail M.A."/>
            <person name="Sanders M."/>
            <person name="Simmonds M."/>
            <person name="Willey D."/>
            <person name="Brooks K."/>
            <person name="Aanensen D.M."/>
            <person name="Spratt B.G."/>
            <person name="Jolley K.A."/>
            <person name="Maiden M.C.J."/>
            <person name="Kehoe M."/>
            <person name="Chanter N."/>
            <person name="Bentley S.D."/>
            <person name="Robinson C."/>
            <person name="Maskell D.J."/>
            <person name="Parkhill J."/>
            <person name="Waller A.S."/>
        </authorList>
    </citation>
    <scope>NUCLEOTIDE SEQUENCE [LARGE SCALE GENOMIC DNA]</scope>
    <source>
        <strain>4047</strain>
    </source>
</reference>
<proteinExistence type="inferred from homology"/>
<name>PEPT_STRE4</name>
<protein>
    <recommendedName>
        <fullName evidence="1">Peptidase T</fullName>
        <ecNumber evidence="1">3.4.11.4</ecNumber>
    </recommendedName>
    <alternativeName>
        <fullName evidence="1">Aminotripeptidase</fullName>
        <shortName evidence="1">Tripeptidase</shortName>
    </alternativeName>
    <alternativeName>
        <fullName evidence="1">Tripeptide aminopeptidase</fullName>
    </alternativeName>
</protein>
<organism>
    <name type="scientific">Streptococcus equi subsp. equi (strain 4047)</name>
    <dbReference type="NCBI Taxonomy" id="553482"/>
    <lineage>
        <taxon>Bacteria</taxon>
        <taxon>Bacillati</taxon>
        <taxon>Bacillota</taxon>
        <taxon>Bacilli</taxon>
        <taxon>Lactobacillales</taxon>
        <taxon>Streptococcaceae</taxon>
        <taxon>Streptococcus</taxon>
    </lineage>
</organism>
<keyword id="KW-0031">Aminopeptidase</keyword>
<keyword id="KW-0963">Cytoplasm</keyword>
<keyword id="KW-0378">Hydrolase</keyword>
<keyword id="KW-0479">Metal-binding</keyword>
<keyword id="KW-0482">Metalloprotease</keyword>
<keyword id="KW-0645">Protease</keyword>
<keyword id="KW-0862">Zinc</keyword>
<accession>C0M8H1</accession>
<comment type="function">
    <text evidence="1">Cleaves the N-terminal amino acid of tripeptides.</text>
</comment>
<comment type="catalytic activity">
    <reaction evidence="1">
        <text>Release of the N-terminal residue from a tripeptide.</text>
        <dbReference type="EC" id="3.4.11.4"/>
    </reaction>
</comment>
<comment type="cofactor">
    <cofactor evidence="1">
        <name>Zn(2+)</name>
        <dbReference type="ChEBI" id="CHEBI:29105"/>
    </cofactor>
    <text evidence="1">Binds 2 Zn(2+) ions per subunit.</text>
</comment>
<comment type="subcellular location">
    <subcellularLocation>
        <location evidence="1">Cytoplasm</location>
    </subcellularLocation>
</comment>
<comment type="similarity">
    <text evidence="1">Belongs to the peptidase M20B family.</text>
</comment>
<gene>
    <name evidence="1" type="primary">pepT</name>
    <name type="ordered locus">SEQ_0976</name>
</gene>
<feature type="chain" id="PRO_1000200898" description="Peptidase T">
    <location>
        <begin position="1"/>
        <end position="407"/>
    </location>
</feature>
<feature type="active site" evidence="1">
    <location>
        <position position="84"/>
    </location>
</feature>
<feature type="active site" description="Proton acceptor" evidence="1">
    <location>
        <position position="177"/>
    </location>
</feature>
<feature type="binding site" evidence="1">
    <location>
        <position position="82"/>
    </location>
    <ligand>
        <name>Zn(2+)</name>
        <dbReference type="ChEBI" id="CHEBI:29105"/>
        <label>1</label>
    </ligand>
</feature>
<feature type="binding site" evidence="1">
    <location>
        <position position="143"/>
    </location>
    <ligand>
        <name>Zn(2+)</name>
        <dbReference type="ChEBI" id="CHEBI:29105"/>
        <label>1</label>
    </ligand>
</feature>
<feature type="binding site" evidence="1">
    <location>
        <position position="143"/>
    </location>
    <ligand>
        <name>Zn(2+)</name>
        <dbReference type="ChEBI" id="CHEBI:29105"/>
        <label>2</label>
    </ligand>
</feature>
<feature type="binding site" evidence="1">
    <location>
        <position position="178"/>
    </location>
    <ligand>
        <name>Zn(2+)</name>
        <dbReference type="ChEBI" id="CHEBI:29105"/>
        <label>2</label>
    </ligand>
</feature>
<feature type="binding site" evidence="1">
    <location>
        <position position="200"/>
    </location>
    <ligand>
        <name>Zn(2+)</name>
        <dbReference type="ChEBI" id="CHEBI:29105"/>
        <label>1</label>
    </ligand>
</feature>
<feature type="binding site" evidence="1">
    <location>
        <position position="382"/>
    </location>
    <ligand>
        <name>Zn(2+)</name>
        <dbReference type="ChEBI" id="CHEBI:29105"/>
        <label>2</label>
    </ligand>
</feature>
<sequence length="407" mass="44570">MTYETLLERFLNYVKINTRSNPASTTTPSTKSQADFALTVLKPEMEAIGLQDIHYNPANGYLIGSLPANSSKLTRKIGFIAHMDTADFNAEGVAPQIIESYQGGEIKLGQSGYSLCPEDFPNLNQYLGQTLITTDGTTLLGADDKSGIAEIMTAIEFLVANPQIEHCDIKVAFGPDEEIGVGADKFDVNAFDVDFAYTIDGGPLGELQYETFSAAALELKVLGRNVHPGTAKNQMINALQLAMDFHSQLPVDDRPEKTDGYQGFYHLHSMSGTVEEAQASYIIRDFEDSSFEARKAFVTQLAEEMNSQLGAERVFVTVTDQYYNMKKVIEKDMTPVNLAKAVMEDLAIKPVIEPIRGGTDGSKISFMGIPTPNIFAGGENMHGRFEFVSLQTMEKAVDVILGIVQKA</sequence>
<dbReference type="EC" id="3.4.11.4" evidence="1"/>
<dbReference type="EMBL" id="FM204883">
    <property type="protein sequence ID" value="CAW93535.1"/>
    <property type="molecule type" value="Genomic_DNA"/>
</dbReference>
<dbReference type="RefSeq" id="WP_012678064.1">
    <property type="nucleotide sequence ID" value="NC_012471.1"/>
</dbReference>
<dbReference type="SMR" id="C0M8H1"/>
<dbReference type="MEROPS" id="M20.003"/>
<dbReference type="KEGG" id="seu:SEQ_0976"/>
<dbReference type="HOGENOM" id="CLU_053676_0_0_9"/>
<dbReference type="OrthoDB" id="9804934at2"/>
<dbReference type="Proteomes" id="UP000001365">
    <property type="component" value="Chromosome"/>
</dbReference>
<dbReference type="GO" id="GO:0005829">
    <property type="term" value="C:cytosol"/>
    <property type="evidence" value="ECO:0007669"/>
    <property type="project" value="TreeGrafter"/>
</dbReference>
<dbReference type="GO" id="GO:0008237">
    <property type="term" value="F:metallopeptidase activity"/>
    <property type="evidence" value="ECO:0007669"/>
    <property type="project" value="UniProtKB-KW"/>
</dbReference>
<dbReference type="GO" id="GO:0045148">
    <property type="term" value="F:tripeptide aminopeptidase activity"/>
    <property type="evidence" value="ECO:0007669"/>
    <property type="project" value="UniProtKB-UniRule"/>
</dbReference>
<dbReference type="GO" id="GO:0008270">
    <property type="term" value="F:zinc ion binding"/>
    <property type="evidence" value="ECO:0007669"/>
    <property type="project" value="UniProtKB-UniRule"/>
</dbReference>
<dbReference type="GO" id="GO:0043171">
    <property type="term" value="P:peptide catabolic process"/>
    <property type="evidence" value="ECO:0007669"/>
    <property type="project" value="UniProtKB-UniRule"/>
</dbReference>
<dbReference type="GO" id="GO:0006508">
    <property type="term" value="P:proteolysis"/>
    <property type="evidence" value="ECO:0007669"/>
    <property type="project" value="UniProtKB-UniRule"/>
</dbReference>
<dbReference type="CDD" id="cd03892">
    <property type="entry name" value="M20_peptT"/>
    <property type="match status" value="1"/>
</dbReference>
<dbReference type="FunFam" id="3.30.70.360:FF:000002">
    <property type="entry name" value="Peptidase T"/>
    <property type="match status" value="1"/>
</dbReference>
<dbReference type="Gene3D" id="3.30.70.360">
    <property type="match status" value="1"/>
</dbReference>
<dbReference type="Gene3D" id="3.40.630.10">
    <property type="entry name" value="Zn peptidases"/>
    <property type="match status" value="1"/>
</dbReference>
<dbReference type="HAMAP" id="MF_00550">
    <property type="entry name" value="Aminopeptidase_M20"/>
    <property type="match status" value="1"/>
</dbReference>
<dbReference type="InterPro" id="IPR001261">
    <property type="entry name" value="ArgE/DapE_CS"/>
</dbReference>
<dbReference type="InterPro" id="IPR036264">
    <property type="entry name" value="Bact_exopeptidase_dim_dom"/>
</dbReference>
<dbReference type="InterPro" id="IPR002933">
    <property type="entry name" value="Peptidase_M20"/>
</dbReference>
<dbReference type="InterPro" id="IPR011650">
    <property type="entry name" value="Peptidase_M20_dimer"/>
</dbReference>
<dbReference type="InterPro" id="IPR010161">
    <property type="entry name" value="Peptidase_M20B"/>
</dbReference>
<dbReference type="NCBIfam" id="TIGR01882">
    <property type="entry name" value="peptidase-T"/>
    <property type="match status" value="1"/>
</dbReference>
<dbReference type="NCBIfam" id="NF003976">
    <property type="entry name" value="PRK05469.1"/>
    <property type="match status" value="1"/>
</dbReference>
<dbReference type="NCBIfam" id="NF009920">
    <property type="entry name" value="PRK13381.1"/>
    <property type="match status" value="1"/>
</dbReference>
<dbReference type="PANTHER" id="PTHR42994">
    <property type="entry name" value="PEPTIDASE T"/>
    <property type="match status" value="1"/>
</dbReference>
<dbReference type="PANTHER" id="PTHR42994:SF1">
    <property type="entry name" value="PEPTIDASE T"/>
    <property type="match status" value="1"/>
</dbReference>
<dbReference type="Pfam" id="PF07687">
    <property type="entry name" value="M20_dimer"/>
    <property type="match status" value="1"/>
</dbReference>
<dbReference type="Pfam" id="PF01546">
    <property type="entry name" value="Peptidase_M20"/>
    <property type="match status" value="1"/>
</dbReference>
<dbReference type="PIRSF" id="PIRSF037215">
    <property type="entry name" value="Peptidase_M20B"/>
    <property type="match status" value="1"/>
</dbReference>
<dbReference type="SUPFAM" id="SSF55031">
    <property type="entry name" value="Bacterial exopeptidase dimerisation domain"/>
    <property type="match status" value="1"/>
</dbReference>
<dbReference type="SUPFAM" id="SSF53187">
    <property type="entry name" value="Zn-dependent exopeptidases"/>
    <property type="match status" value="1"/>
</dbReference>
<dbReference type="PROSITE" id="PS00758">
    <property type="entry name" value="ARGE_DAPE_CPG2_1"/>
    <property type="match status" value="1"/>
</dbReference>
<dbReference type="PROSITE" id="PS00759">
    <property type="entry name" value="ARGE_DAPE_CPG2_2"/>
    <property type="match status" value="1"/>
</dbReference>
<evidence type="ECO:0000255" key="1">
    <source>
        <dbReference type="HAMAP-Rule" id="MF_00550"/>
    </source>
</evidence>